<protein>
    <recommendedName>
        <fullName>Probable cysteine desulfurase</fullName>
        <ecNumber>2.8.1.7</ecNumber>
    </recommendedName>
</protein>
<name>CSD_HALSA</name>
<keyword id="KW-0663">Pyridoxal phosphate</keyword>
<keyword id="KW-1185">Reference proteome</keyword>
<keyword id="KW-0808">Transferase</keyword>
<feature type="chain" id="PRO_0000150326" description="Probable cysteine desulfurase">
    <location>
        <begin position="1"/>
        <end position="415"/>
    </location>
</feature>
<feature type="active site" description="Cysteine persulfide intermediate" evidence="1">
    <location>
        <position position="372"/>
    </location>
</feature>
<feature type="modified residue" description="N6-(pyridoxal phosphate)lysine" evidence="1">
    <location>
        <position position="233"/>
    </location>
</feature>
<proteinExistence type="inferred from homology"/>
<accession>Q9HMM6</accession>
<comment type="catalytic activity">
    <reaction>
        <text>(sulfur carrier)-H + L-cysteine = (sulfur carrier)-SH + L-alanine</text>
        <dbReference type="Rhea" id="RHEA:43892"/>
        <dbReference type="Rhea" id="RHEA-COMP:14737"/>
        <dbReference type="Rhea" id="RHEA-COMP:14739"/>
        <dbReference type="ChEBI" id="CHEBI:29917"/>
        <dbReference type="ChEBI" id="CHEBI:35235"/>
        <dbReference type="ChEBI" id="CHEBI:57972"/>
        <dbReference type="ChEBI" id="CHEBI:64428"/>
        <dbReference type="EC" id="2.8.1.7"/>
    </reaction>
</comment>
<comment type="cofactor">
    <cofactor evidence="1">
        <name>pyridoxal 5'-phosphate</name>
        <dbReference type="ChEBI" id="CHEBI:597326"/>
    </cofactor>
</comment>
<comment type="similarity">
    <text evidence="2">Belongs to the class-V pyridoxal-phosphate-dependent aminotransferase family. Csd subfamily.</text>
</comment>
<organism>
    <name type="scientific">Halobacterium salinarum (strain ATCC 700922 / JCM 11081 / NRC-1)</name>
    <name type="common">Halobacterium halobium</name>
    <dbReference type="NCBI Taxonomy" id="64091"/>
    <lineage>
        <taxon>Archaea</taxon>
        <taxon>Methanobacteriati</taxon>
        <taxon>Methanobacteriota</taxon>
        <taxon>Stenosarchaea group</taxon>
        <taxon>Halobacteria</taxon>
        <taxon>Halobacteriales</taxon>
        <taxon>Halobacteriaceae</taxon>
        <taxon>Halobacterium</taxon>
        <taxon>Halobacterium salinarum NRC-34001</taxon>
    </lineage>
</organism>
<reference key="1">
    <citation type="journal article" date="2000" name="Proc. Natl. Acad. Sci. U.S.A.">
        <title>Genome sequence of Halobacterium species NRC-1.</title>
        <authorList>
            <person name="Ng W.V."/>
            <person name="Kennedy S.P."/>
            <person name="Mahairas G.G."/>
            <person name="Berquist B."/>
            <person name="Pan M."/>
            <person name="Shukla H.D."/>
            <person name="Lasky S.R."/>
            <person name="Baliga N.S."/>
            <person name="Thorsson V."/>
            <person name="Sbrogna J."/>
            <person name="Swartzell S."/>
            <person name="Weir D."/>
            <person name="Hall J."/>
            <person name="Dahl T.A."/>
            <person name="Welti R."/>
            <person name="Goo Y.A."/>
            <person name="Leithauser B."/>
            <person name="Keller K."/>
            <person name="Cruz R."/>
            <person name="Danson M.J."/>
            <person name="Hough D.W."/>
            <person name="Maddocks D.G."/>
            <person name="Jablonski P.E."/>
            <person name="Krebs M.P."/>
            <person name="Angevine C.M."/>
            <person name="Dale H."/>
            <person name="Isenbarger T.A."/>
            <person name="Peck R.F."/>
            <person name="Pohlschroder M."/>
            <person name="Spudich J.L."/>
            <person name="Jung K.-H."/>
            <person name="Alam M."/>
            <person name="Freitas T."/>
            <person name="Hou S."/>
            <person name="Daniels C.J."/>
            <person name="Dennis P.P."/>
            <person name="Omer A.D."/>
            <person name="Ebhardt H."/>
            <person name="Lowe T.M."/>
            <person name="Liang P."/>
            <person name="Riley M."/>
            <person name="Hood L."/>
            <person name="DasSarma S."/>
        </authorList>
    </citation>
    <scope>NUCLEOTIDE SEQUENCE [LARGE SCALE GENOMIC DNA]</scope>
    <source>
        <strain>ATCC 700922 / JCM 11081 / NRC-1</strain>
    </source>
</reference>
<evidence type="ECO:0000250" key="1"/>
<evidence type="ECO:0000305" key="2"/>
<sequence>MEATEQGPIDVEAVRADFPILEREVAGGEDLVYLDNAATSHTPEPVVDAIADYYRRYNSNVHRGLHELSQEASVAYEDAHDKLAAFVGGEDREEMVFTKNTTEAENLVAFAWGLNELGPGDEVVLTQMEHHASLVTWQQVADETGAEVKYIPITDDGHLDMDAAADMITDDTALVNAVHISNTLGTVNPVGELADIAHDHGAYIFVDGAQAAPTRAVDVQEIDADFYAFSGHKMLGPTGIGCLYGKRHLLAEMEPFLYGGDMIERVSYEDATWNDPPWKFEAGTPVIAQGIALAEAVDYLQDIGMDAIRAHEEALTEYAYDQLTMTDDVDVYGPPGDDRGAVVSFNVDGIHAHDLSSILNDYGVAIRAGDHCTQPLHDTLGVPASARASFYLYNTRDEVDALVAAVDEARQIFAP</sequence>
<gene>
    <name type="primary">csd</name>
    <name type="ordered locus">VNG_2471G</name>
</gene>
<dbReference type="EC" id="2.8.1.7"/>
<dbReference type="EMBL" id="AE004437">
    <property type="protein sequence ID" value="AAG20545.1"/>
    <property type="molecule type" value="Genomic_DNA"/>
</dbReference>
<dbReference type="PIR" id="E84397">
    <property type="entry name" value="E84397"/>
</dbReference>
<dbReference type="RefSeq" id="WP_010903847.1">
    <property type="nucleotide sequence ID" value="NC_002607.1"/>
</dbReference>
<dbReference type="SMR" id="Q9HMM6"/>
<dbReference type="STRING" id="64091.VNG_2471G"/>
<dbReference type="PaxDb" id="64091-VNG_2471G"/>
<dbReference type="KEGG" id="hal:VNG_2471G"/>
<dbReference type="PATRIC" id="fig|64091.14.peg.1913"/>
<dbReference type="HOGENOM" id="CLU_003433_2_5_2"/>
<dbReference type="InParanoid" id="Q9HMM6"/>
<dbReference type="OrthoDB" id="5817at2157"/>
<dbReference type="PhylomeDB" id="Q9HMM6"/>
<dbReference type="Proteomes" id="UP000000554">
    <property type="component" value="Chromosome"/>
</dbReference>
<dbReference type="GO" id="GO:0031071">
    <property type="term" value="F:cysteine desulfurase activity"/>
    <property type="evidence" value="ECO:0007669"/>
    <property type="project" value="UniProtKB-EC"/>
</dbReference>
<dbReference type="GO" id="GO:0030170">
    <property type="term" value="F:pyridoxal phosphate binding"/>
    <property type="evidence" value="ECO:0007669"/>
    <property type="project" value="InterPro"/>
</dbReference>
<dbReference type="GO" id="GO:0006534">
    <property type="term" value="P:cysteine metabolic process"/>
    <property type="evidence" value="ECO:0007669"/>
    <property type="project" value="InterPro"/>
</dbReference>
<dbReference type="CDD" id="cd06453">
    <property type="entry name" value="SufS_like"/>
    <property type="match status" value="1"/>
</dbReference>
<dbReference type="Gene3D" id="3.90.1150.10">
    <property type="entry name" value="Aspartate Aminotransferase, domain 1"/>
    <property type="match status" value="1"/>
</dbReference>
<dbReference type="Gene3D" id="3.40.640.10">
    <property type="entry name" value="Type I PLP-dependent aspartate aminotransferase-like (Major domain)"/>
    <property type="match status" value="1"/>
</dbReference>
<dbReference type="InterPro" id="IPR000192">
    <property type="entry name" value="Aminotrans_V_dom"/>
</dbReference>
<dbReference type="InterPro" id="IPR010970">
    <property type="entry name" value="Cys_dSase_SufS"/>
</dbReference>
<dbReference type="InterPro" id="IPR015424">
    <property type="entry name" value="PyrdxlP-dep_Trfase"/>
</dbReference>
<dbReference type="InterPro" id="IPR015421">
    <property type="entry name" value="PyrdxlP-dep_Trfase_major"/>
</dbReference>
<dbReference type="InterPro" id="IPR015422">
    <property type="entry name" value="PyrdxlP-dep_Trfase_small"/>
</dbReference>
<dbReference type="NCBIfam" id="TIGR01979">
    <property type="entry name" value="sufS"/>
    <property type="match status" value="1"/>
</dbReference>
<dbReference type="PANTHER" id="PTHR43586">
    <property type="entry name" value="CYSTEINE DESULFURASE"/>
    <property type="match status" value="1"/>
</dbReference>
<dbReference type="PANTHER" id="PTHR43586:SF8">
    <property type="entry name" value="CYSTEINE DESULFURASE 1, CHLOROPLASTIC"/>
    <property type="match status" value="1"/>
</dbReference>
<dbReference type="Pfam" id="PF00266">
    <property type="entry name" value="Aminotran_5"/>
    <property type="match status" value="1"/>
</dbReference>
<dbReference type="SUPFAM" id="SSF53383">
    <property type="entry name" value="PLP-dependent transferases"/>
    <property type="match status" value="1"/>
</dbReference>